<feature type="chain" id="PRO_1000054211" description="GTP 3',8-cyclase">
    <location>
        <begin position="1"/>
        <end position="332"/>
    </location>
</feature>
<feature type="domain" description="Radical SAM core" evidence="2">
    <location>
        <begin position="9"/>
        <end position="220"/>
    </location>
</feature>
<feature type="binding site" evidence="1">
    <location>
        <position position="18"/>
    </location>
    <ligand>
        <name>GTP</name>
        <dbReference type="ChEBI" id="CHEBI:37565"/>
    </ligand>
</feature>
<feature type="binding site" evidence="1">
    <location>
        <position position="25"/>
    </location>
    <ligand>
        <name>[4Fe-4S] cluster</name>
        <dbReference type="ChEBI" id="CHEBI:49883"/>
        <label>1</label>
        <note>4Fe-4S-S-AdoMet</note>
    </ligand>
</feature>
<feature type="binding site" evidence="1">
    <location>
        <position position="29"/>
    </location>
    <ligand>
        <name>[4Fe-4S] cluster</name>
        <dbReference type="ChEBI" id="CHEBI:49883"/>
        <label>1</label>
        <note>4Fe-4S-S-AdoMet</note>
    </ligand>
</feature>
<feature type="binding site" evidence="1">
    <location>
        <position position="31"/>
    </location>
    <ligand>
        <name>S-adenosyl-L-methionine</name>
        <dbReference type="ChEBI" id="CHEBI:59789"/>
    </ligand>
</feature>
<feature type="binding site" evidence="1">
    <location>
        <position position="32"/>
    </location>
    <ligand>
        <name>[4Fe-4S] cluster</name>
        <dbReference type="ChEBI" id="CHEBI:49883"/>
        <label>1</label>
        <note>4Fe-4S-S-AdoMet</note>
    </ligand>
</feature>
<feature type="binding site" evidence="1">
    <location>
        <position position="67"/>
    </location>
    <ligand>
        <name>GTP</name>
        <dbReference type="ChEBI" id="CHEBI:37565"/>
    </ligand>
</feature>
<feature type="binding site" evidence="1">
    <location>
        <position position="71"/>
    </location>
    <ligand>
        <name>S-adenosyl-L-methionine</name>
        <dbReference type="ChEBI" id="CHEBI:59789"/>
    </ligand>
</feature>
<feature type="binding site" evidence="1">
    <location>
        <position position="98"/>
    </location>
    <ligand>
        <name>GTP</name>
        <dbReference type="ChEBI" id="CHEBI:37565"/>
    </ligand>
</feature>
<feature type="binding site" evidence="1">
    <location>
        <position position="122"/>
    </location>
    <ligand>
        <name>S-adenosyl-L-methionine</name>
        <dbReference type="ChEBI" id="CHEBI:59789"/>
    </ligand>
</feature>
<feature type="binding site" evidence="1">
    <location>
        <position position="159"/>
    </location>
    <ligand>
        <name>GTP</name>
        <dbReference type="ChEBI" id="CHEBI:37565"/>
    </ligand>
</feature>
<feature type="binding site" evidence="1">
    <location>
        <position position="193"/>
    </location>
    <ligand>
        <name>S-adenosyl-L-methionine</name>
        <dbReference type="ChEBI" id="CHEBI:59789"/>
    </ligand>
</feature>
<feature type="binding site" evidence="1">
    <location>
        <position position="258"/>
    </location>
    <ligand>
        <name>[4Fe-4S] cluster</name>
        <dbReference type="ChEBI" id="CHEBI:49883"/>
        <label>2</label>
        <note>4Fe-4S-substrate</note>
    </ligand>
</feature>
<feature type="binding site" evidence="1">
    <location>
        <position position="261"/>
    </location>
    <ligand>
        <name>[4Fe-4S] cluster</name>
        <dbReference type="ChEBI" id="CHEBI:49883"/>
        <label>2</label>
        <note>4Fe-4S-substrate</note>
    </ligand>
</feature>
<feature type="binding site" evidence="1">
    <location>
        <begin position="263"/>
        <end position="265"/>
    </location>
    <ligand>
        <name>GTP</name>
        <dbReference type="ChEBI" id="CHEBI:37565"/>
    </ligand>
</feature>
<feature type="binding site" evidence="1">
    <location>
        <position position="275"/>
    </location>
    <ligand>
        <name>[4Fe-4S] cluster</name>
        <dbReference type="ChEBI" id="CHEBI:49883"/>
        <label>2</label>
        <note>4Fe-4S-substrate</note>
    </ligand>
</feature>
<protein>
    <recommendedName>
        <fullName evidence="1">GTP 3',8-cyclase</fullName>
        <ecNumber evidence="1">4.1.99.22</ecNumber>
    </recommendedName>
    <alternativeName>
        <fullName evidence="1">Molybdenum cofactor biosynthesis protein A</fullName>
    </alternativeName>
</protein>
<comment type="function">
    <text evidence="1">Catalyzes the cyclization of GTP to (8S)-3',8-cyclo-7,8-dihydroguanosine 5'-triphosphate.</text>
</comment>
<comment type="catalytic activity">
    <reaction evidence="1">
        <text>GTP + AH2 + S-adenosyl-L-methionine = (8S)-3',8-cyclo-7,8-dihydroguanosine 5'-triphosphate + 5'-deoxyadenosine + L-methionine + A + H(+)</text>
        <dbReference type="Rhea" id="RHEA:49576"/>
        <dbReference type="ChEBI" id="CHEBI:13193"/>
        <dbReference type="ChEBI" id="CHEBI:15378"/>
        <dbReference type="ChEBI" id="CHEBI:17319"/>
        <dbReference type="ChEBI" id="CHEBI:17499"/>
        <dbReference type="ChEBI" id="CHEBI:37565"/>
        <dbReference type="ChEBI" id="CHEBI:57844"/>
        <dbReference type="ChEBI" id="CHEBI:59789"/>
        <dbReference type="ChEBI" id="CHEBI:131766"/>
        <dbReference type="EC" id="4.1.99.22"/>
    </reaction>
</comment>
<comment type="cofactor">
    <cofactor evidence="1">
        <name>[4Fe-4S] cluster</name>
        <dbReference type="ChEBI" id="CHEBI:49883"/>
    </cofactor>
    <text evidence="1">Binds 2 [4Fe-4S] clusters. Binds 1 [4Fe-4S] cluster coordinated with 3 cysteines and an exchangeable S-adenosyl-L-methionine and 1 [4Fe-4S] cluster coordinated with 3 cysteines and the GTP-derived substrate.</text>
</comment>
<comment type="pathway">
    <text evidence="1">Cofactor biosynthesis; molybdopterin biosynthesis.</text>
</comment>
<comment type="subunit">
    <text evidence="1">Monomer and homodimer.</text>
</comment>
<comment type="similarity">
    <text evidence="1">Belongs to the radical SAM superfamily. MoaA family.</text>
</comment>
<organism>
    <name type="scientific">Pseudomonas savastanoi pv. phaseolicola (strain 1448A / Race 6)</name>
    <name type="common">Pseudomonas syringae pv. phaseolicola (strain 1448A / Race 6)</name>
    <dbReference type="NCBI Taxonomy" id="264730"/>
    <lineage>
        <taxon>Bacteria</taxon>
        <taxon>Pseudomonadati</taxon>
        <taxon>Pseudomonadota</taxon>
        <taxon>Gammaproteobacteria</taxon>
        <taxon>Pseudomonadales</taxon>
        <taxon>Pseudomonadaceae</taxon>
        <taxon>Pseudomonas</taxon>
    </lineage>
</organism>
<evidence type="ECO:0000255" key="1">
    <source>
        <dbReference type="HAMAP-Rule" id="MF_01225"/>
    </source>
</evidence>
<evidence type="ECO:0000255" key="2">
    <source>
        <dbReference type="PROSITE-ProRule" id="PRU01266"/>
    </source>
</evidence>
<accession>Q48HV8</accession>
<dbReference type="EC" id="4.1.99.22" evidence="1"/>
<dbReference type="EMBL" id="CP000058">
    <property type="protein sequence ID" value="AAZ37724.1"/>
    <property type="molecule type" value="Genomic_DNA"/>
</dbReference>
<dbReference type="RefSeq" id="WP_002553792.1">
    <property type="nucleotide sequence ID" value="NC_005773.3"/>
</dbReference>
<dbReference type="SMR" id="Q48HV8"/>
<dbReference type="KEGG" id="psp:PSPPH_2841"/>
<dbReference type="eggNOG" id="COG2896">
    <property type="taxonomic scope" value="Bacteria"/>
</dbReference>
<dbReference type="HOGENOM" id="CLU_009273_0_1_6"/>
<dbReference type="UniPathway" id="UPA00344"/>
<dbReference type="Proteomes" id="UP000000551">
    <property type="component" value="Chromosome"/>
</dbReference>
<dbReference type="GO" id="GO:0051539">
    <property type="term" value="F:4 iron, 4 sulfur cluster binding"/>
    <property type="evidence" value="ECO:0007669"/>
    <property type="project" value="UniProtKB-UniRule"/>
</dbReference>
<dbReference type="GO" id="GO:0061799">
    <property type="term" value="F:cyclic pyranopterin monophosphate synthase activity"/>
    <property type="evidence" value="ECO:0007669"/>
    <property type="project" value="TreeGrafter"/>
</dbReference>
<dbReference type="GO" id="GO:0061798">
    <property type="term" value="F:GTP 3',8'-cyclase activity"/>
    <property type="evidence" value="ECO:0007669"/>
    <property type="project" value="UniProtKB-UniRule"/>
</dbReference>
<dbReference type="GO" id="GO:0005525">
    <property type="term" value="F:GTP binding"/>
    <property type="evidence" value="ECO:0007669"/>
    <property type="project" value="UniProtKB-UniRule"/>
</dbReference>
<dbReference type="GO" id="GO:0046872">
    <property type="term" value="F:metal ion binding"/>
    <property type="evidence" value="ECO:0007669"/>
    <property type="project" value="UniProtKB-KW"/>
</dbReference>
<dbReference type="GO" id="GO:1904047">
    <property type="term" value="F:S-adenosyl-L-methionine binding"/>
    <property type="evidence" value="ECO:0007669"/>
    <property type="project" value="UniProtKB-UniRule"/>
</dbReference>
<dbReference type="GO" id="GO:0006777">
    <property type="term" value="P:Mo-molybdopterin cofactor biosynthetic process"/>
    <property type="evidence" value="ECO:0007669"/>
    <property type="project" value="UniProtKB-UniRule"/>
</dbReference>
<dbReference type="CDD" id="cd01335">
    <property type="entry name" value="Radical_SAM"/>
    <property type="match status" value="1"/>
</dbReference>
<dbReference type="CDD" id="cd21117">
    <property type="entry name" value="Twitch_MoaA"/>
    <property type="match status" value="1"/>
</dbReference>
<dbReference type="Gene3D" id="3.20.20.70">
    <property type="entry name" value="Aldolase class I"/>
    <property type="match status" value="1"/>
</dbReference>
<dbReference type="HAMAP" id="MF_01225_B">
    <property type="entry name" value="MoaA_B"/>
    <property type="match status" value="1"/>
</dbReference>
<dbReference type="InterPro" id="IPR013785">
    <property type="entry name" value="Aldolase_TIM"/>
</dbReference>
<dbReference type="InterPro" id="IPR006638">
    <property type="entry name" value="Elp3/MiaA/NifB-like_rSAM"/>
</dbReference>
<dbReference type="InterPro" id="IPR013483">
    <property type="entry name" value="MoaA"/>
</dbReference>
<dbReference type="InterPro" id="IPR000385">
    <property type="entry name" value="MoaA_NifB_PqqE_Fe-S-bd_CS"/>
</dbReference>
<dbReference type="InterPro" id="IPR010505">
    <property type="entry name" value="MoaA_twitch"/>
</dbReference>
<dbReference type="InterPro" id="IPR050105">
    <property type="entry name" value="MoCo_biosynth_MoaA/MoaC"/>
</dbReference>
<dbReference type="InterPro" id="IPR007197">
    <property type="entry name" value="rSAM"/>
</dbReference>
<dbReference type="NCBIfam" id="TIGR02666">
    <property type="entry name" value="moaA"/>
    <property type="match status" value="1"/>
</dbReference>
<dbReference type="PANTHER" id="PTHR22960:SF0">
    <property type="entry name" value="MOLYBDENUM COFACTOR BIOSYNTHESIS PROTEIN 1"/>
    <property type="match status" value="1"/>
</dbReference>
<dbReference type="PANTHER" id="PTHR22960">
    <property type="entry name" value="MOLYBDOPTERIN COFACTOR SYNTHESIS PROTEIN A"/>
    <property type="match status" value="1"/>
</dbReference>
<dbReference type="Pfam" id="PF13353">
    <property type="entry name" value="Fer4_12"/>
    <property type="match status" value="1"/>
</dbReference>
<dbReference type="Pfam" id="PF06463">
    <property type="entry name" value="Mob_synth_C"/>
    <property type="match status" value="1"/>
</dbReference>
<dbReference type="Pfam" id="PF04055">
    <property type="entry name" value="Radical_SAM"/>
    <property type="match status" value="1"/>
</dbReference>
<dbReference type="SFLD" id="SFLDG01383">
    <property type="entry name" value="cyclic_pyranopterin_phosphate"/>
    <property type="match status" value="1"/>
</dbReference>
<dbReference type="SFLD" id="SFLDG01216">
    <property type="entry name" value="thioether_bond_formation_requi"/>
    <property type="match status" value="1"/>
</dbReference>
<dbReference type="SMART" id="SM00729">
    <property type="entry name" value="Elp3"/>
    <property type="match status" value="1"/>
</dbReference>
<dbReference type="SUPFAM" id="SSF102114">
    <property type="entry name" value="Radical SAM enzymes"/>
    <property type="match status" value="1"/>
</dbReference>
<dbReference type="PROSITE" id="PS01305">
    <property type="entry name" value="MOAA_NIFB_PQQE"/>
    <property type="match status" value="1"/>
</dbReference>
<dbReference type="PROSITE" id="PS51918">
    <property type="entry name" value="RADICAL_SAM"/>
    <property type="match status" value="1"/>
</dbReference>
<name>MOAA_PSE14</name>
<sequence>MSEPVLMDRFARKVDYLRMSVTDRCDFRCVYCMAEEMTFLPRQQILSLEEILQVAERFVALGTRKIRLTGGEPLVRSGVVGLCEKIAALPGLRELCMTTNGSQLDKLAAPLFKAGVTRLNISLDSLDPQRFRELTRTGDLHKVIAGIDAANAAGFVHTKLNCVVMHGRNDHEINDLLAFAIDRNLDVSFIEEMPLGIISEHSRAESFYSSDQVRERIAERYTLVPSTDSTQGPSRYWRLAEAPGIRIGFISPHSHNFCGTCNRVRLTVEGRLLLCLGNEHSVDLKAVLRANPGQPEKLEKAIIDAMQIKPWSHNFTHDDGVQVVRFMNMTGG</sequence>
<gene>
    <name evidence="1" type="primary">moaA</name>
    <name type="ordered locus">PSPPH_2841</name>
</gene>
<keyword id="KW-0004">4Fe-4S</keyword>
<keyword id="KW-0342">GTP-binding</keyword>
<keyword id="KW-0408">Iron</keyword>
<keyword id="KW-0411">Iron-sulfur</keyword>
<keyword id="KW-0456">Lyase</keyword>
<keyword id="KW-0479">Metal-binding</keyword>
<keyword id="KW-0501">Molybdenum cofactor biosynthesis</keyword>
<keyword id="KW-0547">Nucleotide-binding</keyword>
<keyword id="KW-0949">S-adenosyl-L-methionine</keyword>
<proteinExistence type="inferred from homology"/>
<reference key="1">
    <citation type="journal article" date="2005" name="J. Bacteriol.">
        <title>Whole-genome sequence analysis of Pseudomonas syringae pv. phaseolicola 1448A reveals divergence among pathovars in genes involved in virulence and transposition.</title>
        <authorList>
            <person name="Joardar V."/>
            <person name="Lindeberg M."/>
            <person name="Jackson R.W."/>
            <person name="Selengut J."/>
            <person name="Dodson R."/>
            <person name="Brinkac L.M."/>
            <person name="Daugherty S.C."/>
            <person name="DeBoy R.T."/>
            <person name="Durkin A.S."/>
            <person name="Gwinn Giglio M."/>
            <person name="Madupu R."/>
            <person name="Nelson W.C."/>
            <person name="Rosovitz M.J."/>
            <person name="Sullivan S.A."/>
            <person name="Crabtree J."/>
            <person name="Creasy T."/>
            <person name="Davidsen T.M."/>
            <person name="Haft D.H."/>
            <person name="Zafar N."/>
            <person name="Zhou L."/>
            <person name="Halpin R."/>
            <person name="Holley T."/>
            <person name="Khouri H.M."/>
            <person name="Feldblyum T.V."/>
            <person name="White O."/>
            <person name="Fraser C.M."/>
            <person name="Chatterjee A.K."/>
            <person name="Cartinhour S."/>
            <person name="Schneider D."/>
            <person name="Mansfield J.W."/>
            <person name="Collmer A."/>
            <person name="Buell R."/>
        </authorList>
    </citation>
    <scope>NUCLEOTIDE SEQUENCE [LARGE SCALE GENOMIC DNA]</scope>
    <source>
        <strain>1448A / Race 6</strain>
    </source>
</reference>